<proteinExistence type="inferred from homology"/>
<feature type="chain" id="PRO_0000381226" description="Biotin synthase">
    <location>
        <begin position="1"/>
        <end position="332"/>
    </location>
</feature>
<feature type="domain" description="Radical SAM core" evidence="2">
    <location>
        <begin position="53"/>
        <end position="282"/>
    </location>
</feature>
<feature type="binding site" evidence="1">
    <location>
        <position position="71"/>
    </location>
    <ligand>
        <name>[4Fe-4S] cluster</name>
        <dbReference type="ChEBI" id="CHEBI:49883"/>
        <note>4Fe-4S-S-AdoMet</note>
    </ligand>
</feature>
<feature type="binding site" evidence="1">
    <location>
        <position position="75"/>
    </location>
    <ligand>
        <name>[4Fe-4S] cluster</name>
        <dbReference type="ChEBI" id="CHEBI:49883"/>
        <note>4Fe-4S-S-AdoMet</note>
    </ligand>
</feature>
<feature type="binding site" evidence="1">
    <location>
        <position position="78"/>
    </location>
    <ligand>
        <name>[4Fe-4S] cluster</name>
        <dbReference type="ChEBI" id="CHEBI:49883"/>
        <note>4Fe-4S-S-AdoMet</note>
    </ligand>
</feature>
<feature type="binding site" evidence="1">
    <location>
        <position position="115"/>
    </location>
    <ligand>
        <name>[2Fe-2S] cluster</name>
        <dbReference type="ChEBI" id="CHEBI:190135"/>
    </ligand>
</feature>
<feature type="binding site" evidence="1">
    <location>
        <position position="147"/>
    </location>
    <ligand>
        <name>[2Fe-2S] cluster</name>
        <dbReference type="ChEBI" id="CHEBI:190135"/>
    </ligand>
</feature>
<feature type="binding site" evidence="1">
    <location>
        <position position="207"/>
    </location>
    <ligand>
        <name>[2Fe-2S] cluster</name>
        <dbReference type="ChEBI" id="CHEBI:190135"/>
    </ligand>
</feature>
<feature type="binding site" evidence="1">
    <location>
        <position position="277"/>
    </location>
    <ligand>
        <name>[2Fe-2S] cluster</name>
        <dbReference type="ChEBI" id="CHEBI:190135"/>
    </ligand>
</feature>
<comment type="function">
    <text evidence="1">Catalyzes the conversion of dethiobiotin (DTB) to biotin by the insertion of a sulfur atom into dethiobiotin via a radical-based mechanism.</text>
</comment>
<comment type="catalytic activity">
    <reaction evidence="1">
        <text>(4R,5S)-dethiobiotin + (sulfur carrier)-SH + 2 reduced [2Fe-2S]-[ferredoxin] + 2 S-adenosyl-L-methionine = (sulfur carrier)-H + biotin + 2 5'-deoxyadenosine + 2 L-methionine + 2 oxidized [2Fe-2S]-[ferredoxin]</text>
        <dbReference type="Rhea" id="RHEA:22060"/>
        <dbReference type="Rhea" id="RHEA-COMP:10000"/>
        <dbReference type="Rhea" id="RHEA-COMP:10001"/>
        <dbReference type="Rhea" id="RHEA-COMP:14737"/>
        <dbReference type="Rhea" id="RHEA-COMP:14739"/>
        <dbReference type="ChEBI" id="CHEBI:17319"/>
        <dbReference type="ChEBI" id="CHEBI:29917"/>
        <dbReference type="ChEBI" id="CHEBI:33737"/>
        <dbReference type="ChEBI" id="CHEBI:33738"/>
        <dbReference type="ChEBI" id="CHEBI:57586"/>
        <dbReference type="ChEBI" id="CHEBI:57844"/>
        <dbReference type="ChEBI" id="CHEBI:59789"/>
        <dbReference type="ChEBI" id="CHEBI:64428"/>
        <dbReference type="ChEBI" id="CHEBI:149473"/>
        <dbReference type="EC" id="2.8.1.6"/>
    </reaction>
</comment>
<comment type="cofactor">
    <cofactor evidence="1">
        <name>[4Fe-4S] cluster</name>
        <dbReference type="ChEBI" id="CHEBI:49883"/>
    </cofactor>
    <text evidence="1">Binds 1 [4Fe-4S] cluster. The cluster is coordinated with 3 cysteines and an exchangeable S-adenosyl-L-methionine.</text>
</comment>
<comment type="cofactor">
    <cofactor evidence="1">
        <name>[2Fe-2S] cluster</name>
        <dbReference type="ChEBI" id="CHEBI:190135"/>
    </cofactor>
    <text evidence="1">Binds 1 [2Fe-2S] cluster. The cluster is coordinated with 3 cysteines and 1 arginine.</text>
</comment>
<comment type="pathway">
    <text evidence="1">Cofactor biosynthesis; biotin biosynthesis; biotin from 7,8-diaminononanoate: step 2/2.</text>
</comment>
<comment type="subunit">
    <text evidence="1">Homodimer.</text>
</comment>
<comment type="similarity">
    <text evidence="1">Belongs to the radical SAM superfamily. Biotin synthase family.</text>
</comment>
<keyword id="KW-0001">2Fe-2S</keyword>
<keyword id="KW-0004">4Fe-4S</keyword>
<keyword id="KW-0093">Biotin biosynthesis</keyword>
<keyword id="KW-0408">Iron</keyword>
<keyword id="KW-0411">Iron-sulfur</keyword>
<keyword id="KW-0479">Metal-binding</keyword>
<keyword id="KW-0949">S-adenosyl-L-methionine</keyword>
<keyword id="KW-0808">Transferase</keyword>
<evidence type="ECO:0000255" key="1">
    <source>
        <dbReference type="HAMAP-Rule" id="MF_01694"/>
    </source>
</evidence>
<evidence type="ECO:0000255" key="2">
    <source>
        <dbReference type="PROSITE-ProRule" id="PRU01266"/>
    </source>
</evidence>
<gene>
    <name evidence="1" type="primary">bioB</name>
    <name type="ordered locus">BCE33L3870</name>
</gene>
<accession>Q635G7</accession>
<sequence length="332" mass="36996">MKQVQTKRDWKKLAYDVVEEKMITKEDAIAILEADDTEVLEIMNAAYIIRHHYFGKKVKLNMIINTKSGLCPEDCGYCSQSIISEAPIDKYAWLTQEKIVEGAHEAIRRKAGTYCIVASGRRPTDKEVNHVIGAVKEIRETTDLKICCCLGFLNEDQAGRLAEAGVHRYNHNLNTHANNYESICSTHTYDDRVDTVQKAKQAGISPCSGAIFGMGETIEERAEIAFELQRIDADSIPCNFLVAVKGTPLEGQKELTPVECLKVLAMMRFVNPTKEIRISGGREINLRSVQPIGLFAANSIFVGDYLTTAGQEPTADWGMIEDLGFEIEECAL</sequence>
<reference key="1">
    <citation type="journal article" date="2006" name="J. Bacteriol.">
        <title>Pathogenomic sequence analysis of Bacillus cereus and Bacillus thuringiensis isolates closely related to Bacillus anthracis.</title>
        <authorList>
            <person name="Han C.S."/>
            <person name="Xie G."/>
            <person name="Challacombe J.F."/>
            <person name="Altherr M.R."/>
            <person name="Bhotika S.S."/>
            <person name="Bruce D."/>
            <person name="Campbell C.S."/>
            <person name="Campbell M.L."/>
            <person name="Chen J."/>
            <person name="Chertkov O."/>
            <person name="Cleland C."/>
            <person name="Dimitrijevic M."/>
            <person name="Doggett N.A."/>
            <person name="Fawcett J.J."/>
            <person name="Glavina T."/>
            <person name="Goodwin L.A."/>
            <person name="Hill K.K."/>
            <person name="Hitchcock P."/>
            <person name="Jackson P.J."/>
            <person name="Keim P."/>
            <person name="Kewalramani A.R."/>
            <person name="Longmire J."/>
            <person name="Lucas S."/>
            <person name="Malfatti S."/>
            <person name="McMurry K."/>
            <person name="Meincke L.J."/>
            <person name="Misra M."/>
            <person name="Moseman B.L."/>
            <person name="Mundt M."/>
            <person name="Munk A.C."/>
            <person name="Okinaka R.T."/>
            <person name="Parson-Quintana B."/>
            <person name="Reilly L.P."/>
            <person name="Richardson P."/>
            <person name="Robinson D.L."/>
            <person name="Rubin E."/>
            <person name="Saunders E."/>
            <person name="Tapia R."/>
            <person name="Tesmer J.G."/>
            <person name="Thayer N."/>
            <person name="Thompson L.S."/>
            <person name="Tice H."/>
            <person name="Ticknor L.O."/>
            <person name="Wills P.L."/>
            <person name="Brettin T.S."/>
            <person name="Gilna P."/>
        </authorList>
    </citation>
    <scope>NUCLEOTIDE SEQUENCE [LARGE SCALE GENOMIC DNA]</scope>
    <source>
        <strain>ZK / E33L</strain>
    </source>
</reference>
<organism>
    <name type="scientific">Bacillus cereus (strain ZK / E33L)</name>
    <dbReference type="NCBI Taxonomy" id="288681"/>
    <lineage>
        <taxon>Bacteria</taxon>
        <taxon>Bacillati</taxon>
        <taxon>Bacillota</taxon>
        <taxon>Bacilli</taxon>
        <taxon>Bacillales</taxon>
        <taxon>Bacillaceae</taxon>
        <taxon>Bacillus</taxon>
        <taxon>Bacillus cereus group</taxon>
    </lineage>
</organism>
<name>BIOB_BACCZ</name>
<protein>
    <recommendedName>
        <fullName evidence="1">Biotin synthase</fullName>
        <ecNumber evidence="1">2.8.1.6</ecNumber>
    </recommendedName>
</protein>
<dbReference type="EC" id="2.8.1.6" evidence="1"/>
<dbReference type="EMBL" id="CP000001">
    <property type="protein sequence ID" value="AAU16397.1"/>
    <property type="molecule type" value="Genomic_DNA"/>
</dbReference>
<dbReference type="RefSeq" id="WP_000815862.1">
    <property type="nucleotide sequence ID" value="NZ_CP009968.1"/>
</dbReference>
<dbReference type="SMR" id="Q635G7"/>
<dbReference type="GeneID" id="45024003"/>
<dbReference type="KEGG" id="bcz:BCE33L3870"/>
<dbReference type="PATRIC" id="fig|288681.22.peg.1530"/>
<dbReference type="UniPathway" id="UPA00078">
    <property type="reaction ID" value="UER00162"/>
</dbReference>
<dbReference type="Proteomes" id="UP000002612">
    <property type="component" value="Chromosome"/>
</dbReference>
<dbReference type="GO" id="GO:0051537">
    <property type="term" value="F:2 iron, 2 sulfur cluster binding"/>
    <property type="evidence" value="ECO:0007669"/>
    <property type="project" value="UniProtKB-KW"/>
</dbReference>
<dbReference type="GO" id="GO:0051539">
    <property type="term" value="F:4 iron, 4 sulfur cluster binding"/>
    <property type="evidence" value="ECO:0007669"/>
    <property type="project" value="UniProtKB-KW"/>
</dbReference>
<dbReference type="GO" id="GO:0004076">
    <property type="term" value="F:biotin synthase activity"/>
    <property type="evidence" value="ECO:0007669"/>
    <property type="project" value="UniProtKB-UniRule"/>
</dbReference>
<dbReference type="GO" id="GO:0005506">
    <property type="term" value="F:iron ion binding"/>
    <property type="evidence" value="ECO:0007669"/>
    <property type="project" value="UniProtKB-UniRule"/>
</dbReference>
<dbReference type="GO" id="GO:0009102">
    <property type="term" value="P:biotin biosynthetic process"/>
    <property type="evidence" value="ECO:0007669"/>
    <property type="project" value="UniProtKB-UniRule"/>
</dbReference>
<dbReference type="CDD" id="cd01335">
    <property type="entry name" value="Radical_SAM"/>
    <property type="match status" value="1"/>
</dbReference>
<dbReference type="FunFam" id="3.20.20.70:FF:000026">
    <property type="entry name" value="Biotin synthase"/>
    <property type="match status" value="1"/>
</dbReference>
<dbReference type="Gene3D" id="3.20.20.70">
    <property type="entry name" value="Aldolase class I"/>
    <property type="match status" value="1"/>
</dbReference>
<dbReference type="HAMAP" id="MF_01694">
    <property type="entry name" value="BioB"/>
    <property type="match status" value="1"/>
</dbReference>
<dbReference type="InterPro" id="IPR013785">
    <property type="entry name" value="Aldolase_TIM"/>
</dbReference>
<dbReference type="InterPro" id="IPR010722">
    <property type="entry name" value="BATS_dom"/>
</dbReference>
<dbReference type="InterPro" id="IPR002684">
    <property type="entry name" value="Biotin_synth/BioAB"/>
</dbReference>
<dbReference type="InterPro" id="IPR024177">
    <property type="entry name" value="Biotin_synthase"/>
</dbReference>
<dbReference type="InterPro" id="IPR006638">
    <property type="entry name" value="Elp3/MiaA/NifB-like_rSAM"/>
</dbReference>
<dbReference type="InterPro" id="IPR007197">
    <property type="entry name" value="rSAM"/>
</dbReference>
<dbReference type="NCBIfam" id="TIGR00433">
    <property type="entry name" value="bioB"/>
    <property type="match status" value="1"/>
</dbReference>
<dbReference type="PANTHER" id="PTHR22976">
    <property type="entry name" value="BIOTIN SYNTHASE"/>
    <property type="match status" value="1"/>
</dbReference>
<dbReference type="PANTHER" id="PTHR22976:SF2">
    <property type="entry name" value="BIOTIN SYNTHASE, MITOCHONDRIAL"/>
    <property type="match status" value="1"/>
</dbReference>
<dbReference type="Pfam" id="PF06968">
    <property type="entry name" value="BATS"/>
    <property type="match status" value="1"/>
</dbReference>
<dbReference type="Pfam" id="PF04055">
    <property type="entry name" value="Radical_SAM"/>
    <property type="match status" value="1"/>
</dbReference>
<dbReference type="PIRSF" id="PIRSF001619">
    <property type="entry name" value="Biotin_synth"/>
    <property type="match status" value="1"/>
</dbReference>
<dbReference type="SFLD" id="SFLDG01060">
    <property type="entry name" value="BATS_domain_containing"/>
    <property type="match status" value="1"/>
</dbReference>
<dbReference type="SFLD" id="SFLDG01278">
    <property type="entry name" value="biotin_synthase_like"/>
    <property type="match status" value="1"/>
</dbReference>
<dbReference type="SMART" id="SM00876">
    <property type="entry name" value="BATS"/>
    <property type="match status" value="1"/>
</dbReference>
<dbReference type="SMART" id="SM00729">
    <property type="entry name" value="Elp3"/>
    <property type="match status" value="1"/>
</dbReference>
<dbReference type="SUPFAM" id="SSF102114">
    <property type="entry name" value="Radical SAM enzymes"/>
    <property type="match status" value="1"/>
</dbReference>
<dbReference type="PROSITE" id="PS51918">
    <property type="entry name" value="RADICAL_SAM"/>
    <property type="match status" value="1"/>
</dbReference>